<accession>Q92WB5</accession>
<evidence type="ECO:0000255" key="1">
    <source>
        <dbReference type="HAMAP-Rule" id="MF_00106"/>
    </source>
</evidence>
<name>UXUA_RHIME</name>
<gene>
    <name evidence="1" type="primary">uxuA</name>
    <name type="ordered locus">RB0428</name>
    <name type="ORF">SMb20446</name>
</gene>
<dbReference type="EC" id="4.2.1.8" evidence="1"/>
<dbReference type="EMBL" id="AL591985">
    <property type="protein sequence ID" value="CAC48828.1"/>
    <property type="molecule type" value="Genomic_DNA"/>
</dbReference>
<dbReference type="PIR" id="D95895">
    <property type="entry name" value="D95895"/>
</dbReference>
<dbReference type="RefSeq" id="NP_436968.1">
    <property type="nucleotide sequence ID" value="NC_003078.1"/>
</dbReference>
<dbReference type="RefSeq" id="WP_010975307.1">
    <property type="nucleotide sequence ID" value="NC_003078.1"/>
</dbReference>
<dbReference type="SMR" id="Q92WB5"/>
<dbReference type="EnsemblBacteria" id="CAC48828">
    <property type="protein sequence ID" value="CAC48828"/>
    <property type="gene ID" value="SM_b20446"/>
</dbReference>
<dbReference type="GeneID" id="89578451"/>
<dbReference type="KEGG" id="sme:SM_b20446"/>
<dbReference type="PATRIC" id="fig|266834.11.peg.5358"/>
<dbReference type="eggNOG" id="COG1312">
    <property type="taxonomic scope" value="Bacteria"/>
</dbReference>
<dbReference type="HOGENOM" id="CLU_058621_2_0_5"/>
<dbReference type="OrthoDB" id="9780250at2"/>
<dbReference type="UniPathway" id="UPA00246"/>
<dbReference type="Proteomes" id="UP000001976">
    <property type="component" value="Plasmid pSymB"/>
</dbReference>
<dbReference type="GO" id="GO:0008198">
    <property type="term" value="F:ferrous iron binding"/>
    <property type="evidence" value="ECO:0007669"/>
    <property type="project" value="TreeGrafter"/>
</dbReference>
<dbReference type="GO" id="GO:0030145">
    <property type="term" value="F:manganese ion binding"/>
    <property type="evidence" value="ECO:0007669"/>
    <property type="project" value="TreeGrafter"/>
</dbReference>
<dbReference type="GO" id="GO:0008927">
    <property type="term" value="F:mannonate dehydratase activity"/>
    <property type="evidence" value="ECO:0007669"/>
    <property type="project" value="UniProtKB-UniRule"/>
</dbReference>
<dbReference type="GO" id="GO:0042840">
    <property type="term" value="P:D-glucuronate catabolic process"/>
    <property type="evidence" value="ECO:0007669"/>
    <property type="project" value="TreeGrafter"/>
</dbReference>
<dbReference type="Gene3D" id="3.20.20.150">
    <property type="entry name" value="Divalent-metal-dependent TIM barrel enzymes"/>
    <property type="match status" value="1"/>
</dbReference>
<dbReference type="HAMAP" id="MF_00106">
    <property type="entry name" value="UxuA"/>
    <property type="match status" value="1"/>
</dbReference>
<dbReference type="InterPro" id="IPR004628">
    <property type="entry name" value="Man_deHydtase"/>
</dbReference>
<dbReference type="InterPro" id="IPR036237">
    <property type="entry name" value="Xyl_isomerase-like_sf"/>
</dbReference>
<dbReference type="NCBIfam" id="NF003027">
    <property type="entry name" value="PRK03906.1"/>
    <property type="match status" value="1"/>
</dbReference>
<dbReference type="NCBIfam" id="TIGR00695">
    <property type="entry name" value="uxuA"/>
    <property type="match status" value="1"/>
</dbReference>
<dbReference type="PANTHER" id="PTHR30387">
    <property type="entry name" value="MANNONATE DEHYDRATASE"/>
    <property type="match status" value="1"/>
</dbReference>
<dbReference type="PANTHER" id="PTHR30387:SF2">
    <property type="entry name" value="MANNONATE DEHYDRATASE"/>
    <property type="match status" value="1"/>
</dbReference>
<dbReference type="Pfam" id="PF03786">
    <property type="entry name" value="UxuA"/>
    <property type="match status" value="1"/>
</dbReference>
<dbReference type="PIRSF" id="PIRSF016049">
    <property type="entry name" value="Man_dehyd"/>
    <property type="match status" value="1"/>
</dbReference>
<dbReference type="SUPFAM" id="SSF51658">
    <property type="entry name" value="Xylose isomerase-like"/>
    <property type="match status" value="1"/>
</dbReference>
<sequence>MRHTWRWFGPVDRVSVQDAAQAGAHGIVSALHHIPTGDVWPVDEIGKRQEEVRAGGLEWEVVESVPVSECIKTQTGPWREHVANWQETLRRLSAAGIRTVCYNFMPVLDWTRTDLRWTARHGAKAMRFDRIDFAAFDIHLLERPAAHEDYDTATREAAERRFREMTEERRLALSRNIGAGLPGSADGYSLPQLREHLRTYDGVSREKLQRHLVEFLAEVAPVAERTGINICAHPDDPPWALLGLPRILSNAEDYAFMLREVDSPANGVTLCTGSLGALAANDLPAMTRQFASRIHFVHLRNVLREEVRTPCSFYEDEHLEGDTDMVAVIAELLQEEQRRRAAGRVDHQIPMRPDHGQEILDDLSRGAQPGYPAIGRLKGLAELRGIERALSHATYGLSAATR</sequence>
<protein>
    <recommendedName>
        <fullName evidence="1">Mannonate dehydratase</fullName>
        <ecNumber evidence="1">4.2.1.8</ecNumber>
    </recommendedName>
    <alternativeName>
        <fullName evidence="1">D-mannonate hydro-lyase</fullName>
    </alternativeName>
</protein>
<proteinExistence type="inferred from homology"/>
<reference key="1">
    <citation type="journal article" date="2001" name="Proc. Natl. Acad. Sci. U.S.A.">
        <title>The complete sequence of the 1,683-kb pSymB megaplasmid from the N2-fixing endosymbiont Sinorhizobium meliloti.</title>
        <authorList>
            <person name="Finan T.M."/>
            <person name="Weidner S."/>
            <person name="Wong K."/>
            <person name="Buhrmester J."/>
            <person name="Chain P."/>
            <person name="Vorhoelter F.J."/>
            <person name="Hernandez-Lucas I."/>
            <person name="Becker A."/>
            <person name="Cowie A."/>
            <person name="Gouzy J."/>
            <person name="Golding B."/>
            <person name="Puehler A."/>
        </authorList>
    </citation>
    <scope>NUCLEOTIDE SEQUENCE [LARGE SCALE GENOMIC DNA]</scope>
    <source>
        <strain>1021</strain>
    </source>
</reference>
<reference key="2">
    <citation type="journal article" date="2001" name="Science">
        <title>The composite genome of the legume symbiont Sinorhizobium meliloti.</title>
        <authorList>
            <person name="Galibert F."/>
            <person name="Finan T.M."/>
            <person name="Long S.R."/>
            <person name="Puehler A."/>
            <person name="Abola P."/>
            <person name="Ampe F."/>
            <person name="Barloy-Hubler F."/>
            <person name="Barnett M.J."/>
            <person name="Becker A."/>
            <person name="Boistard P."/>
            <person name="Bothe G."/>
            <person name="Boutry M."/>
            <person name="Bowser L."/>
            <person name="Buhrmester J."/>
            <person name="Cadieu E."/>
            <person name="Capela D."/>
            <person name="Chain P."/>
            <person name="Cowie A."/>
            <person name="Davis R.W."/>
            <person name="Dreano S."/>
            <person name="Federspiel N.A."/>
            <person name="Fisher R.F."/>
            <person name="Gloux S."/>
            <person name="Godrie T."/>
            <person name="Goffeau A."/>
            <person name="Golding B."/>
            <person name="Gouzy J."/>
            <person name="Gurjal M."/>
            <person name="Hernandez-Lucas I."/>
            <person name="Hong A."/>
            <person name="Huizar L."/>
            <person name="Hyman R.W."/>
            <person name="Jones T."/>
            <person name="Kahn D."/>
            <person name="Kahn M.L."/>
            <person name="Kalman S."/>
            <person name="Keating D.H."/>
            <person name="Kiss E."/>
            <person name="Komp C."/>
            <person name="Lelaure V."/>
            <person name="Masuy D."/>
            <person name="Palm C."/>
            <person name="Peck M.C."/>
            <person name="Pohl T.M."/>
            <person name="Portetelle D."/>
            <person name="Purnelle B."/>
            <person name="Ramsperger U."/>
            <person name="Surzycki R."/>
            <person name="Thebault P."/>
            <person name="Vandenbol M."/>
            <person name="Vorhoelter F.J."/>
            <person name="Weidner S."/>
            <person name="Wells D.H."/>
            <person name="Wong K."/>
            <person name="Yeh K.-C."/>
            <person name="Batut J."/>
        </authorList>
    </citation>
    <scope>NUCLEOTIDE SEQUENCE [LARGE SCALE GENOMIC DNA]</scope>
    <source>
        <strain>1021</strain>
    </source>
</reference>
<geneLocation type="plasmid">
    <name>pSymB</name>
    <name>megaplasmid 2</name>
</geneLocation>
<organism>
    <name type="scientific">Rhizobium meliloti (strain 1021)</name>
    <name type="common">Ensifer meliloti</name>
    <name type="synonym">Sinorhizobium meliloti</name>
    <dbReference type="NCBI Taxonomy" id="266834"/>
    <lineage>
        <taxon>Bacteria</taxon>
        <taxon>Pseudomonadati</taxon>
        <taxon>Pseudomonadota</taxon>
        <taxon>Alphaproteobacteria</taxon>
        <taxon>Hyphomicrobiales</taxon>
        <taxon>Rhizobiaceae</taxon>
        <taxon>Sinorhizobium/Ensifer group</taxon>
        <taxon>Sinorhizobium</taxon>
    </lineage>
</organism>
<comment type="function">
    <text evidence="1">Catalyzes the dehydration of D-mannonate.</text>
</comment>
<comment type="catalytic activity">
    <reaction evidence="1">
        <text>D-mannonate = 2-dehydro-3-deoxy-D-gluconate + H2O</text>
        <dbReference type="Rhea" id="RHEA:20097"/>
        <dbReference type="ChEBI" id="CHEBI:15377"/>
        <dbReference type="ChEBI" id="CHEBI:17767"/>
        <dbReference type="ChEBI" id="CHEBI:57990"/>
        <dbReference type="EC" id="4.2.1.8"/>
    </reaction>
</comment>
<comment type="cofactor">
    <cofactor evidence="1">
        <name>Fe(2+)</name>
        <dbReference type="ChEBI" id="CHEBI:29033"/>
    </cofactor>
    <cofactor evidence="1">
        <name>Mn(2+)</name>
        <dbReference type="ChEBI" id="CHEBI:29035"/>
    </cofactor>
</comment>
<comment type="pathway">
    <text evidence="1">Carbohydrate metabolism; pentose and glucuronate interconversion.</text>
</comment>
<comment type="similarity">
    <text evidence="1">Belongs to the mannonate dehydratase family.</text>
</comment>
<feature type="chain" id="PRO_0000170683" description="Mannonate dehydratase">
    <location>
        <begin position="1"/>
        <end position="402"/>
    </location>
</feature>
<keyword id="KW-0408">Iron</keyword>
<keyword id="KW-0456">Lyase</keyword>
<keyword id="KW-0464">Manganese</keyword>
<keyword id="KW-0614">Plasmid</keyword>
<keyword id="KW-1185">Reference proteome</keyword>